<dbReference type="EMBL" id="CR382123">
    <property type="protein sequence ID" value="CAH01094.1"/>
    <property type="molecule type" value="Genomic_DNA"/>
</dbReference>
<dbReference type="EMBL" id="AJ243958">
    <property type="protein sequence ID" value="CAB51613.1"/>
    <property type="molecule type" value="Genomic_DNA"/>
</dbReference>
<dbReference type="RefSeq" id="XP_452243.1">
    <property type="nucleotide sequence ID" value="XM_452243.1"/>
</dbReference>
<dbReference type="SMR" id="Q6CUZ6"/>
<dbReference type="FunCoup" id="Q6CUZ6">
    <property type="interactions" value="55"/>
</dbReference>
<dbReference type="STRING" id="284590.Q6CUZ6"/>
<dbReference type="PaxDb" id="284590-Q6CUZ6"/>
<dbReference type="KEGG" id="kla:KLLA0_C01089g"/>
<dbReference type="eggNOG" id="ENOG502QR67">
    <property type="taxonomic scope" value="Eukaryota"/>
</dbReference>
<dbReference type="HOGENOM" id="CLU_039216_0_0_1"/>
<dbReference type="InParanoid" id="Q6CUZ6"/>
<dbReference type="OMA" id="FYHEGID"/>
<dbReference type="Proteomes" id="UP000000598">
    <property type="component" value="Chromosome C"/>
</dbReference>
<dbReference type="GO" id="GO:0005743">
    <property type="term" value="C:mitochondrial inner membrane"/>
    <property type="evidence" value="ECO:0007669"/>
    <property type="project" value="UniProtKB-SubCell"/>
</dbReference>
<dbReference type="InterPro" id="IPR013911">
    <property type="entry name" value="i-AAA_Mgr1"/>
</dbReference>
<dbReference type="Pfam" id="PF08602">
    <property type="entry name" value="Mgr1"/>
    <property type="match status" value="1"/>
</dbReference>
<keyword id="KW-0472">Membrane</keyword>
<keyword id="KW-0496">Mitochondrion</keyword>
<keyword id="KW-0999">Mitochondrion inner membrane</keyword>
<keyword id="KW-1185">Reference proteome</keyword>
<keyword id="KW-0812">Transmembrane</keyword>
<keyword id="KW-1133">Transmembrane helix</keyword>
<sequence length="382" mass="44394">MAIYTSGTQSDNSEPVGNDPKFYTRPSLGLKLWGPLVPSSDNTTGLWSLVAIQTGLGLFLMQRFRKLGKKWVKRDIADFPSLNRFSTTHGDMYMTRHIPVQFGGTHSFNIRVGTRTGFWYSERFRTIRRVTYLLAGTLILSQSMLEVSRLTLLKYDPWVEEAKSVREKQFFNDIVKYYHEGVDSTKFKAKDELSGQSISLNLPEVKQSIAVARAQAQAENLVTKWFGPLDYKPQSFSEFLDKLEYYLNMTDFLNNLRRQKKNDKINSQLVKLEEENKRNRQRIHTLMAHAPARAIRTNQEVQDIYAIRKVLLHHDTESPNDIPLTEIWAIYNPWTNLALDTALSIKFFPSVIFNEDYYEHQKRLKDSEHVTSIENSEDERKP</sequence>
<protein>
    <recommendedName>
        <fullName>Mitochondrial inner membrane i-AAA protease complex subunit MGR1</fullName>
    </recommendedName>
</protein>
<proteinExistence type="inferred from homology"/>
<reference key="1">
    <citation type="journal article" date="2004" name="Nature">
        <title>Genome evolution in yeasts.</title>
        <authorList>
            <person name="Dujon B."/>
            <person name="Sherman D."/>
            <person name="Fischer G."/>
            <person name="Durrens P."/>
            <person name="Casaregola S."/>
            <person name="Lafontaine I."/>
            <person name="de Montigny J."/>
            <person name="Marck C."/>
            <person name="Neuveglise C."/>
            <person name="Talla E."/>
            <person name="Goffard N."/>
            <person name="Frangeul L."/>
            <person name="Aigle M."/>
            <person name="Anthouard V."/>
            <person name="Babour A."/>
            <person name="Barbe V."/>
            <person name="Barnay S."/>
            <person name="Blanchin S."/>
            <person name="Beckerich J.-M."/>
            <person name="Beyne E."/>
            <person name="Bleykasten C."/>
            <person name="Boisrame A."/>
            <person name="Boyer J."/>
            <person name="Cattolico L."/>
            <person name="Confanioleri F."/>
            <person name="de Daruvar A."/>
            <person name="Despons L."/>
            <person name="Fabre E."/>
            <person name="Fairhead C."/>
            <person name="Ferry-Dumazet H."/>
            <person name="Groppi A."/>
            <person name="Hantraye F."/>
            <person name="Hennequin C."/>
            <person name="Jauniaux N."/>
            <person name="Joyet P."/>
            <person name="Kachouri R."/>
            <person name="Kerrest A."/>
            <person name="Koszul R."/>
            <person name="Lemaire M."/>
            <person name="Lesur I."/>
            <person name="Ma L."/>
            <person name="Muller H."/>
            <person name="Nicaud J.-M."/>
            <person name="Nikolski M."/>
            <person name="Oztas S."/>
            <person name="Ozier-Kalogeropoulos O."/>
            <person name="Pellenz S."/>
            <person name="Potier S."/>
            <person name="Richard G.-F."/>
            <person name="Straub M.-L."/>
            <person name="Suleau A."/>
            <person name="Swennen D."/>
            <person name="Tekaia F."/>
            <person name="Wesolowski-Louvel M."/>
            <person name="Westhof E."/>
            <person name="Wirth B."/>
            <person name="Zeniou-Meyer M."/>
            <person name="Zivanovic Y."/>
            <person name="Bolotin-Fukuhara M."/>
            <person name="Thierry A."/>
            <person name="Bouchier C."/>
            <person name="Caudron B."/>
            <person name="Scarpelli C."/>
            <person name="Gaillardin C."/>
            <person name="Weissenbach J."/>
            <person name="Wincker P."/>
            <person name="Souciet J.-L."/>
        </authorList>
    </citation>
    <scope>NUCLEOTIDE SEQUENCE [LARGE SCALE GENOMIC DNA]</scope>
    <source>
        <strain>ATCC 8585 / CBS 2359 / DSM 70799 / NBRC 1267 / NRRL Y-1140 / WM37</strain>
    </source>
</reference>
<reference key="2">
    <citation type="journal article" date="2000" name="Yeast">
        <title>Protein disulfide isomerase genes of Kluyveromyces lactis.</title>
        <authorList>
            <person name="Bao W.-G."/>
            <person name="Huo K.K."/>
            <person name="Li Y.Y."/>
            <person name="Fukuhara H."/>
        </authorList>
    </citation>
    <scope>NUCLEOTIDE SEQUENCE [GENOMIC DNA] OF 1-162</scope>
    <source>
        <strain>ATCC 76492 / CBS 2359/152 / CLIB 210</strain>
    </source>
</reference>
<gene>
    <name type="primary">MGR1</name>
    <name type="ordered locus">KLLA0C01089g</name>
</gene>
<organism>
    <name type="scientific">Kluyveromyces lactis (strain ATCC 8585 / CBS 2359 / DSM 70799 / NBRC 1267 / NRRL Y-1140 / WM37)</name>
    <name type="common">Yeast</name>
    <name type="synonym">Candida sphaerica</name>
    <dbReference type="NCBI Taxonomy" id="284590"/>
    <lineage>
        <taxon>Eukaryota</taxon>
        <taxon>Fungi</taxon>
        <taxon>Dikarya</taxon>
        <taxon>Ascomycota</taxon>
        <taxon>Saccharomycotina</taxon>
        <taxon>Saccharomycetes</taxon>
        <taxon>Saccharomycetales</taxon>
        <taxon>Saccharomycetaceae</taxon>
        <taxon>Kluyveromyces</taxon>
    </lineage>
</organism>
<evidence type="ECO:0000250" key="1"/>
<evidence type="ECO:0000255" key="2"/>
<evidence type="ECO:0000305" key="3"/>
<feature type="chain" id="PRO_0000324413" description="Mitochondrial inner membrane i-AAA protease complex subunit MGR1">
    <location>
        <begin position="1"/>
        <end position="382"/>
    </location>
</feature>
<feature type="topological domain" description="Mitochondrial intermembrane" evidence="1">
    <location>
        <begin position="1"/>
        <end position="44"/>
    </location>
</feature>
<feature type="transmembrane region" description="Helical" evidence="2">
    <location>
        <begin position="45"/>
        <end position="61"/>
    </location>
</feature>
<feature type="topological domain" description="Mitochondrial matrix" evidence="1">
    <location>
        <begin position="62"/>
        <end position="129"/>
    </location>
</feature>
<feature type="transmembrane region" description="Helical" evidence="2">
    <location>
        <begin position="130"/>
        <end position="146"/>
    </location>
</feature>
<feature type="topological domain" description="Mitochondrial intermembrane" evidence="1">
    <location>
        <begin position="147"/>
        <end position="382"/>
    </location>
</feature>
<accession>Q6CUZ6</accession>
<accession>Q9URS9</accession>
<comment type="function">
    <text evidence="1">Component of the mitochondrial inner membrane i-AAA protease complex required for mitochondrial inner membrane protein turnover.</text>
</comment>
<comment type="subunit">
    <text evidence="1">Component of the mitochondrial inner membrane i-AAA protease complex.</text>
</comment>
<comment type="subcellular location">
    <subcellularLocation>
        <location evidence="1">Mitochondrion inner membrane</location>
        <topology evidence="1">Multi-pass membrane protein</topology>
    </subcellularLocation>
</comment>
<comment type="similarity">
    <text evidence="3">Belongs to the MGR1 family.</text>
</comment>
<name>MGR1_KLULA</name>